<dbReference type="EMBL" id="AAHF01000003">
    <property type="protein sequence ID" value="EAL91145.1"/>
    <property type="molecule type" value="Genomic_DNA"/>
</dbReference>
<dbReference type="RefSeq" id="XP_753183.1">
    <property type="nucleotide sequence ID" value="XM_748090.1"/>
</dbReference>
<dbReference type="PDB" id="4AGI">
    <property type="method" value="X-ray"/>
    <property type="resolution" value="1.60 A"/>
    <property type="chains" value="A/B/C/D=1-315"/>
</dbReference>
<dbReference type="PDB" id="4AGT">
    <property type="method" value="X-ray"/>
    <property type="resolution" value="2.00 A"/>
    <property type="chains" value="A/B=1-315"/>
</dbReference>
<dbReference type="PDB" id="4AH4">
    <property type="method" value="X-ray"/>
    <property type="resolution" value="1.75 A"/>
    <property type="chains" value="A/B=1-315"/>
</dbReference>
<dbReference type="PDB" id="4AHA">
    <property type="method" value="X-ray"/>
    <property type="resolution" value="2.20 A"/>
    <property type="chains" value="A/B=1-315"/>
</dbReference>
<dbReference type="PDB" id="4C1Y">
    <property type="method" value="X-ray"/>
    <property type="resolution" value="2.23 A"/>
    <property type="chains" value="A/B/C/D=2-315"/>
</dbReference>
<dbReference type="PDB" id="4D4U">
    <property type="method" value="X-ray"/>
    <property type="resolution" value="1.99 A"/>
    <property type="chains" value="A/B=1-315"/>
</dbReference>
<dbReference type="PDB" id="4D52">
    <property type="method" value="X-ray"/>
    <property type="resolution" value="1.76 A"/>
    <property type="chains" value="A/B/C/D=1-315"/>
</dbReference>
<dbReference type="PDB" id="4UOU">
    <property type="method" value="X-ray"/>
    <property type="resolution" value="2.40 A"/>
    <property type="chains" value="A/B/C/D=2-315"/>
</dbReference>
<dbReference type="PDB" id="6Z6C">
    <property type="method" value="X-ray"/>
    <property type="resolution" value="1.40 A"/>
    <property type="chains" value="AAA/BBB=1-315"/>
</dbReference>
<dbReference type="PDBsum" id="4AGI"/>
<dbReference type="PDBsum" id="4AGT"/>
<dbReference type="PDBsum" id="4AH4"/>
<dbReference type="PDBsum" id="4AHA"/>
<dbReference type="PDBsum" id="4C1Y"/>
<dbReference type="PDBsum" id="4D4U"/>
<dbReference type="PDBsum" id="4D52"/>
<dbReference type="PDBsum" id="4UOU"/>
<dbReference type="PDBsum" id="6Z6C"/>
<dbReference type="SMR" id="Q4WW81"/>
<dbReference type="STRING" id="330879.Q4WW81"/>
<dbReference type="UniLectin" id="Q4WW81"/>
<dbReference type="EnsemblFungi" id="EAL91145">
    <property type="protein sequence ID" value="EAL91145"/>
    <property type="gene ID" value="AFUA_5G14740"/>
</dbReference>
<dbReference type="GeneID" id="3511258"/>
<dbReference type="KEGG" id="afm:AFUA_5G14740"/>
<dbReference type="VEuPathDB" id="FungiDB:Afu5g14740"/>
<dbReference type="eggNOG" id="ENOG502SNJJ">
    <property type="taxonomic scope" value="Eukaryota"/>
</dbReference>
<dbReference type="HOGENOM" id="CLU_057373_0_0_1"/>
<dbReference type="InParanoid" id="Q4WW81"/>
<dbReference type="OMA" id="VFNIRLY"/>
<dbReference type="OrthoDB" id="407298at2759"/>
<dbReference type="EvolutionaryTrace" id="Q4WW81"/>
<dbReference type="PHI-base" id="PHI:6256"/>
<dbReference type="PHI-base" id="PHI:7875"/>
<dbReference type="Proteomes" id="UP000002530">
    <property type="component" value="Chromosome 5"/>
</dbReference>
<dbReference type="GO" id="GO:0030246">
    <property type="term" value="F:carbohydrate binding"/>
    <property type="evidence" value="ECO:0007669"/>
    <property type="project" value="UniProtKB-KW"/>
</dbReference>
<dbReference type="GO" id="GO:0046872">
    <property type="term" value="F:metal ion binding"/>
    <property type="evidence" value="ECO:0007669"/>
    <property type="project" value="UniProtKB-KW"/>
</dbReference>
<dbReference type="GO" id="GO:0141025">
    <property type="term" value="P:adhesion of symbiont to host cell surface via host glycoprotein"/>
    <property type="evidence" value="ECO:0000269"/>
    <property type="project" value="SigSci"/>
</dbReference>
<dbReference type="Gene3D" id="2.120.10.70">
    <property type="entry name" value="Fucose-specific lectin"/>
    <property type="match status" value="1"/>
</dbReference>
<dbReference type="InterPro" id="IPR012475">
    <property type="entry name" value="Fungal_lectin"/>
</dbReference>
<dbReference type="Pfam" id="PF07938">
    <property type="entry name" value="Fungal_lectin"/>
    <property type="match status" value="1"/>
</dbReference>
<dbReference type="SUPFAM" id="SSF89372">
    <property type="entry name" value="Fucose-specific lectin"/>
    <property type="match status" value="1"/>
</dbReference>
<accession>Q4WW81</accession>
<evidence type="ECO:0000269" key="1">
    <source>
    </source>
</evidence>
<evidence type="ECO:0000269" key="2">
    <source>
    </source>
</evidence>
<evidence type="ECO:0000269" key="3">
    <source>
    </source>
</evidence>
<evidence type="ECO:0000269" key="4">
    <source>
    </source>
</evidence>
<evidence type="ECO:0000303" key="5">
    <source>
    </source>
</evidence>
<evidence type="ECO:0000305" key="6"/>
<evidence type="ECO:0000305" key="7">
    <source>
    </source>
</evidence>
<evidence type="ECO:0000305" key="8">
    <source>
    </source>
</evidence>
<evidence type="ECO:0007744" key="9">
    <source>
        <dbReference type="PDB" id="4AGT"/>
    </source>
</evidence>
<evidence type="ECO:0007744" key="10">
    <source>
        <dbReference type="PDB" id="4D52"/>
    </source>
</evidence>
<evidence type="ECO:0007829" key="11">
    <source>
        <dbReference type="PDB" id="4AGI"/>
    </source>
</evidence>
<evidence type="ECO:0007829" key="12">
    <source>
        <dbReference type="PDB" id="4D52"/>
    </source>
</evidence>
<sequence length="315" mass="34661">MSTPGAQQVLFRTGIAAVNLTNHLRVYFQDVYGSIRESLYEGSWANGTEKNVIGNAKLGSPVAATSKELKHIRVYTLTEGNTLQEFAYDSGTGWYNGGLGGAKFQVAPYSRIAAVFLAGTDALQLRIYAQKPDNTIQEYMWNGDGWKEGTNLGGALPGTGIGATSFRYTDYNGPSIRIWFQTDDLKLVQRAYDPHKGWYPDLVTIFDRAPPRTAIAATSFGAGNSSIYMRIYFVNSDNTIWQVCWDHGKGYHDKGTITPVIQGSEVAIISWGSFANNGPDLRLYFQNGTYISAVSEWVWNRAHGSQLGRSALPPA</sequence>
<proteinExistence type="evidence at protein level"/>
<gene>
    <name evidence="5" type="primary">fleA</name>
    <name type="ORF">AFUA_5G14740</name>
</gene>
<reference key="1">
    <citation type="journal article" date="2005" name="Nature">
        <title>Genomic sequence of the pathogenic and allergenic filamentous fungus Aspergillus fumigatus.</title>
        <authorList>
            <person name="Nierman W.C."/>
            <person name="Pain A."/>
            <person name="Anderson M.J."/>
            <person name="Wortman J.R."/>
            <person name="Kim H.S."/>
            <person name="Arroyo J."/>
            <person name="Berriman M."/>
            <person name="Abe K."/>
            <person name="Archer D.B."/>
            <person name="Bermejo C."/>
            <person name="Bennett J.W."/>
            <person name="Bowyer P."/>
            <person name="Chen D."/>
            <person name="Collins M."/>
            <person name="Coulsen R."/>
            <person name="Davies R."/>
            <person name="Dyer P.S."/>
            <person name="Farman M.L."/>
            <person name="Fedorova N."/>
            <person name="Fedorova N.D."/>
            <person name="Feldblyum T.V."/>
            <person name="Fischer R."/>
            <person name="Fosker N."/>
            <person name="Fraser A."/>
            <person name="Garcia J.L."/>
            <person name="Garcia M.J."/>
            <person name="Goble A."/>
            <person name="Goldman G.H."/>
            <person name="Gomi K."/>
            <person name="Griffith-Jones S."/>
            <person name="Gwilliam R."/>
            <person name="Haas B.J."/>
            <person name="Haas H."/>
            <person name="Harris D.E."/>
            <person name="Horiuchi H."/>
            <person name="Huang J."/>
            <person name="Humphray S."/>
            <person name="Jimenez J."/>
            <person name="Keller N."/>
            <person name="Khouri H."/>
            <person name="Kitamoto K."/>
            <person name="Kobayashi T."/>
            <person name="Konzack S."/>
            <person name="Kulkarni R."/>
            <person name="Kumagai T."/>
            <person name="Lafton A."/>
            <person name="Latge J.-P."/>
            <person name="Li W."/>
            <person name="Lord A."/>
            <person name="Lu C."/>
            <person name="Majoros W.H."/>
            <person name="May G.S."/>
            <person name="Miller B.L."/>
            <person name="Mohamoud Y."/>
            <person name="Molina M."/>
            <person name="Monod M."/>
            <person name="Mouyna I."/>
            <person name="Mulligan S."/>
            <person name="Murphy L.D."/>
            <person name="O'Neil S."/>
            <person name="Paulsen I."/>
            <person name="Penalva M.A."/>
            <person name="Pertea M."/>
            <person name="Price C."/>
            <person name="Pritchard B.L."/>
            <person name="Quail M.A."/>
            <person name="Rabbinowitsch E."/>
            <person name="Rawlins N."/>
            <person name="Rajandream M.A."/>
            <person name="Reichard U."/>
            <person name="Renauld H."/>
            <person name="Robson G.D."/>
            <person name="Rodriguez de Cordoba S."/>
            <person name="Rodriguez-Pena J.M."/>
            <person name="Ronning C.M."/>
            <person name="Rutter S."/>
            <person name="Salzberg S.L."/>
            <person name="Sanchez M."/>
            <person name="Sanchez-Ferrero J.C."/>
            <person name="Saunders D."/>
            <person name="Seeger K."/>
            <person name="Squares R."/>
            <person name="Squares S."/>
            <person name="Takeuchi M."/>
            <person name="Tekaia F."/>
            <person name="Turner G."/>
            <person name="Vazquez de Aldana C.R."/>
            <person name="Weidman J."/>
            <person name="White O."/>
            <person name="Woodward J.R."/>
            <person name="Yu J.-H."/>
            <person name="Fraser C.M."/>
            <person name="Galagan J.E."/>
            <person name="Asai K."/>
            <person name="Machida M."/>
            <person name="Hall N."/>
            <person name="Barrell B.G."/>
            <person name="Denning D.W."/>
        </authorList>
    </citation>
    <scope>NUCLEOTIDE SEQUENCE [LARGE SCALE GENOMIC DNA]</scope>
    <source>
        <strain>ATCC MYA-4609 / CBS 101355 / FGSC A1100 / Af293</strain>
    </source>
</reference>
<reference key="2">
    <citation type="journal article" date="2013" name="J. Infect. Chemother.">
        <title>Molecular characterization of AfuFleA, an L-fucose-specific lectin from Aspergillus fumigatus.</title>
        <authorList>
            <person name="Kuboi S."/>
            <person name="Ishimaru T."/>
            <person name="Tamada S."/>
            <person name="Bernard E.M."/>
            <person name="Perlin D.S."/>
            <person name="Armstrong D."/>
        </authorList>
    </citation>
    <scope>FUNCTION</scope>
</reference>
<reference key="3">
    <citation type="journal article" date="2016" name="PLoS Pathog.">
        <title>FleA expression in Aspergillus fumigatus is recognized by fucosylated structures on mucins and macrophages to prevent lung infection.</title>
        <authorList>
            <person name="Kerr S.C."/>
            <person name="Fischer G.J."/>
            <person name="Sinha M."/>
            <person name="McCabe O."/>
            <person name="Palmer J.M."/>
            <person name="Choera T."/>
            <person name="Lim F.Y."/>
            <person name="Wimmerova M."/>
            <person name="Carrington S.D."/>
            <person name="Yuan S."/>
            <person name="Lowell C.A."/>
            <person name="Oscarson S."/>
            <person name="Keller N.P."/>
            <person name="Fahy J.V."/>
        </authorList>
    </citation>
    <scope>FUNCTION</scope>
    <scope>DEVELOPMENTAL STAGE</scope>
    <scope>DISRUPTION PHENOTYPE</scope>
</reference>
<reference key="4">
    <citation type="journal article" date="2013" name="PLoS ONE">
        <title>A soluble fucose-specific lectin from Aspergillus fumigatus conidia-- structure, specificity and possible role in fungal pathogenicity.</title>
        <authorList>
            <person name="Houser J."/>
            <person name="Komarek J."/>
            <person name="Kostlanova N."/>
            <person name="Cioci G."/>
            <person name="Varrot A."/>
            <person name="Kerr S.C."/>
            <person name="Lahmann M."/>
            <person name="Balloy V."/>
            <person name="Fahy J.V."/>
            <person name="Chignard M."/>
            <person name="Imberty A."/>
            <person name="Wimmerova M."/>
        </authorList>
    </citation>
    <scope>X-RAY CRYSTALLOGRAPHY (1.60 ANGSTROMS)</scope>
    <scope>DEVELOPMENTAL STAGE</scope>
    <scope>FUNCTION</scope>
    <scope>DOMAIN</scope>
</reference>
<reference key="5">
    <citation type="journal article" date="2015" name="Acta Crystallogr. D">
        <title>Structural insights into Aspergillus fumigatus lectin specificity: AFL binding sites are functionally non-equivalent.</title>
        <authorList>
            <person name="Houser J."/>
            <person name="Komarek J."/>
            <person name="Cioci G."/>
            <person name="Varrot A."/>
            <person name="Imberty A."/>
            <person name="Wimmerova M."/>
        </authorList>
    </citation>
    <scope>X-RAY CRYSTALLOGRAPHY (1.75 ANGSTROMS) IN COMPLEX WITH FUCOSE; GALACTOSE AND N-ACETYL-D-GLUCOSAMINE</scope>
    <scope>DOMAIN</scope>
    <scope>FUNCTION</scope>
    <scope>SUBUNIT</scope>
    <scope>BIOTECHNOLOGY</scope>
</reference>
<organism>
    <name type="scientific">Aspergillus fumigatus (strain ATCC MYA-4609 / CBS 101355 / FGSC A1100 / Af293)</name>
    <name type="common">Neosartorya fumigata</name>
    <dbReference type="NCBI Taxonomy" id="330879"/>
    <lineage>
        <taxon>Eukaryota</taxon>
        <taxon>Fungi</taxon>
        <taxon>Dikarya</taxon>
        <taxon>Ascomycota</taxon>
        <taxon>Pezizomycotina</taxon>
        <taxon>Eurotiomycetes</taxon>
        <taxon>Eurotiomycetidae</taxon>
        <taxon>Eurotiales</taxon>
        <taxon>Aspergillaceae</taxon>
        <taxon>Aspergillus</taxon>
        <taxon>Aspergillus subgen. Fumigati</taxon>
    </lineage>
</organism>
<protein>
    <recommendedName>
        <fullName evidence="5">Fucose-specific lectin</fullName>
    </recommendedName>
    <alternativeName>
        <fullName evidence="5">Aspergillus fumigatus lectin</fullName>
        <shortName evidence="5">AFL</shortName>
    </alternativeName>
</protein>
<name>LECF_ASPFU</name>
<keyword id="KW-0002">3D-structure</keyword>
<keyword id="KW-0430">Lectin</keyword>
<keyword id="KW-0479">Metal-binding</keyword>
<keyword id="KW-1185">Reference proteome</keyword>
<keyword id="KW-0677">Repeat</keyword>
<keyword id="KW-0862">Zinc</keyword>
<comment type="function">
    <text evidence="1 2 3 4">Multispecific lectin that is able to recognize L-fucose in all possible linkages (PubMed:23695231, PubMed:24340081, PubMed:25760594, PubMed:27058347). These could be found not only in decomposed plant matter in soil, which is the natural environment for A.fumigatus, but also in various epitopes on human tissues (PubMed:25760594). Mediates binding of A.fumigatus conidia to airway mucin in a fucose dependent manner (PubMed:27058347). Stimulates IL-8 production by human bronchial cells in a dose-dependent manner, contributing to the inflammatory response observed upon the exposure of a patient to A.fumigatus, and thus might be an important virulence factor involved in an early stage of A.fumigatus infection (PubMed:24340081).</text>
</comment>
<comment type="subunit">
    <text evidence="3">Homodimer (PubMed:25760594).</text>
</comment>
<comment type="developmental stage">
    <text evidence="2 4">Expressed in conidia (PubMed:24340081, PubMed:27058347).</text>
</comment>
<comment type="domain">
    <text evidence="2 3">AFL adopts the six-bladed beta-propeller fold and contains 6 binding sites per monomer, each located between two adjacent blades (PubMed:25760594). The 6 binding sites that are non-equivalent, and owing to minor differences in amino-acid composition they exhibit a marked difference in specific ligand recognition (PubMed:24340081, PubMed:25760594).</text>
</comment>
<comment type="disruption phenotype">
    <text evidence="4">Increases lung infection and lung injury by A.fumigatus (PubMed:27058347).</text>
</comment>
<comment type="biotechnology">
    <text evidence="8">Lectins have particular value as specific probes for investigating the distribution, structure and biological function of carbohydrate chains on the cell surface of animal, plant, and microorganism because of their specificity for defined carbohydrate structures. AFL is suitable for detecting core fucose on cell surface glycoproteins (PubMed:25760594).</text>
</comment>
<comment type="similarity">
    <text evidence="6">Belongs to the fungal fucose-specific lectin family.</text>
</comment>
<feature type="chain" id="PRO_0000442745" description="Fucose-specific lectin">
    <location>
        <begin position="1"/>
        <end position="315"/>
    </location>
</feature>
<feature type="repeat" description="1" evidence="7">
    <location>
        <begin position="2"/>
        <end position="53"/>
    </location>
</feature>
<feature type="repeat" description="2" evidence="7">
    <location>
        <begin position="54"/>
        <end position="103"/>
    </location>
</feature>
<feature type="repeat" description="3" evidence="7">
    <location>
        <begin position="104"/>
        <end position="155"/>
    </location>
</feature>
<feature type="repeat" description="4" evidence="7">
    <location>
        <begin position="156"/>
        <end position="207"/>
    </location>
</feature>
<feature type="repeat" description="5" evidence="7">
    <location>
        <begin position="208"/>
        <end position="260"/>
    </location>
</feature>
<feature type="repeat" description="6" evidence="7">
    <location>
        <begin position="261"/>
        <end position="315"/>
    </location>
</feature>
<feature type="region of interest" description="6 X approximate tandem repeats" evidence="7">
    <location>
        <begin position="2"/>
        <end position="315"/>
    </location>
</feature>
<feature type="binding site" evidence="3 9">
    <location>
        <position position="25"/>
    </location>
    <ligand>
        <name>alpha-L-fucose</name>
        <dbReference type="ChEBI" id="CHEBI:42548"/>
        <label>1</label>
    </ligand>
</feature>
<feature type="binding site" evidence="3 9">
    <location>
        <position position="37"/>
    </location>
    <ligand>
        <name>alpha-L-fucose</name>
        <dbReference type="ChEBI" id="CHEBI:42548"/>
        <label>1</label>
    </ligand>
</feature>
<feature type="binding site" evidence="3 9">
    <location>
        <position position="44"/>
    </location>
    <ligand>
        <name>alpha-L-fucose</name>
        <dbReference type="ChEBI" id="CHEBI:42548"/>
        <label>6</label>
    </ligand>
</feature>
<feature type="binding site" evidence="3 9">
    <location>
        <position position="73"/>
    </location>
    <ligand>
        <name>alpha-L-fucose</name>
        <dbReference type="ChEBI" id="CHEBI:42548"/>
        <label>2</label>
    </ligand>
</feature>
<feature type="binding site" evidence="3 9">
    <location>
        <position position="85"/>
    </location>
    <ligand>
        <name>alpha-L-fucose</name>
        <dbReference type="ChEBI" id="CHEBI:42548"/>
        <label>2</label>
    </ligand>
</feature>
<feature type="binding site" evidence="3 9">
    <location>
        <position position="94"/>
    </location>
    <ligand>
        <name>alpha-L-fucose</name>
        <dbReference type="ChEBI" id="CHEBI:42548"/>
        <label>1</label>
    </ligand>
</feature>
<feature type="binding site" evidence="3 9">
    <location>
        <position position="98"/>
    </location>
    <ligand>
        <name>alpha-L-fucose</name>
        <dbReference type="ChEBI" id="CHEBI:42548"/>
        <label>2</label>
    </ligand>
</feature>
<feature type="binding site" evidence="3 9">
    <location>
        <position position="126"/>
    </location>
    <ligand>
        <name>alpha-L-fucose</name>
        <dbReference type="ChEBI" id="CHEBI:42548"/>
        <label>3</label>
    </ligand>
</feature>
<feature type="binding site" evidence="3 9">
    <location>
        <position position="138"/>
    </location>
    <ligand>
        <name>alpha-L-fucose</name>
        <dbReference type="ChEBI" id="CHEBI:42548"/>
        <label>3</label>
    </ligand>
</feature>
<feature type="binding site" evidence="3 9">
    <location>
        <position position="146"/>
    </location>
    <ligand>
        <name>alpha-L-fucose</name>
        <dbReference type="ChEBI" id="CHEBI:42548"/>
        <label>2</label>
    </ligand>
</feature>
<feature type="binding site" evidence="3 9">
    <location>
        <position position="150"/>
    </location>
    <ligand>
        <name>alpha-L-fucose</name>
        <dbReference type="ChEBI" id="CHEBI:42548"/>
        <label>3</label>
    </ligand>
</feature>
<feature type="binding site" evidence="3 9">
    <location>
        <position position="177"/>
    </location>
    <ligand>
        <name>alpha-L-fucose</name>
        <dbReference type="ChEBI" id="CHEBI:42548"/>
        <label>4</label>
    </ligand>
</feature>
<feature type="binding site" evidence="3 9">
    <location>
        <position position="189"/>
    </location>
    <ligand>
        <name>alpha-L-fucose</name>
        <dbReference type="ChEBI" id="CHEBI:42548"/>
        <label>4</label>
    </ligand>
</feature>
<feature type="binding site" evidence="3 9">
    <location>
        <position position="198"/>
    </location>
    <ligand>
        <name>alpha-L-fucose</name>
        <dbReference type="ChEBI" id="CHEBI:42548"/>
        <label>3</label>
    </ligand>
</feature>
<feature type="binding site" evidence="3 9">
    <location>
        <position position="230"/>
    </location>
    <ligand>
        <name>alpha-L-fucose</name>
        <dbReference type="ChEBI" id="CHEBI:42548"/>
        <label>5</label>
    </ligand>
</feature>
<feature type="binding site" evidence="3 9">
    <location>
        <position position="242"/>
    </location>
    <ligand>
        <name>alpha-L-fucose</name>
        <dbReference type="ChEBI" id="CHEBI:42548"/>
        <label>5</label>
    </ligand>
</feature>
<feature type="binding site" evidence="3 10">
    <location>
        <position position="244"/>
    </location>
    <ligand>
        <name>Zn(2+)</name>
        <dbReference type="ChEBI" id="CHEBI:29105"/>
    </ligand>
</feature>
<feature type="binding site" evidence="3 10">
    <location>
        <position position="246"/>
    </location>
    <ligand>
        <name>Zn(2+)</name>
        <dbReference type="ChEBI" id="CHEBI:29105"/>
    </ligand>
</feature>
<feature type="binding site" evidence="3 10">
    <location>
        <position position="252"/>
    </location>
    <ligand>
        <name>Zn(2+)</name>
        <dbReference type="ChEBI" id="CHEBI:29105"/>
    </ligand>
</feature>
<feature type="binding site" evidence="3 9">
    <location>
        <position position="282"/>
    </location>
    <ligand>
        <name>alpha-L-fucose</name>
        <dbReference type="ChEBI" id="CHEBI:42548"/>
        <label>6</label>
    </ligand>
</feature>
<feature type="binding site" evidence="3 9">
    <location>
        <position position="296"/>
    </location>
    <ligand>
        <name>alpha-L-fucose</name>
        <dbReference type="ChEBI" id="CHEBI:42548"/>
        <label>6</label>
    </ligand>
</feature>
<feature type="helix" evidence="11">
    <location>
        <begin position="6"/>
        <end position="8"/>
    </location>
</feature>
<feature type="strand" evidence="11">
    <location>
        <begin position="15"/>
        <end position="20"/>
    </location>
</feature>
<feature type="strand" evidence="11">
    <location>
        <begin position="23"/>
        <end position="30"/>
    </location>
</feature>
<feature type="strand" evidence="11">
    <location>
        <begin position="33"/>
        <end position="46"/>
    </location>
</feature>
<feature type="helix" evidence="11">
    <location>
        <begin position="49"/>
        <end position="51"/>
    </location>
</feature>
<feature type="strand" evidence="11">
    <location>
        <begin position="52"/>
        <end position="55"/>
    </location>
</feature>
<feature type="strand" evidence="11">
    <location>
        <begin position="63"/>
        <end position="67"/>
    </location>
</feature>
<feature type="turn" evidence="11">
    <location>
        <begin position="68"/>
        <end position="70"/>
    </location>
</feature>
<feature type="strand" evidence="11">
    <location>
        <begin position="71"/>
        <end position="77"/>
    </location>
</feature>
<feature type="strand" evidence="11">
    <location>
        <begin position="81"/>
        <end position="89"/>
    </location>
</feature>
<feature type="turn" evidence="11">
    <location>
        <begin position="90"/>
        <end position="92"/>
    </location>
</feature>
<feature type="strand" evidence="11">
    <location>
        <begin position="93"/>
        <end position="96"/>
    </location>
</feature>
<feature type="helix" evidence="11">
    <location>
        <begin position="98"/>
        <end position="102"/>
    </location>
</feature>
<feature type="strand" evidence="11">
    <location>
        <begin position="113"/>
        <end position="116"/>
    </location>
</feature>
<feature type="strand" evidence="11">
    <location>
        <begin position="125"/>
        <end position="130"/>
    </location>
</feature>
<feature type="strand" evidence="11">
    <location>
        <begin position="134"/>
        <end position="144"/>
    </location>
</feature>
<feature type="strand" evidence="11">
    <location>
        <begin position="146"/>
        <end position="154"/>
    </location>
</feature>
<feature type="strand" evidence="11">
    <location>
        <begin position="161"/>
        <end position="166"/>
    </location>
</feature>
<feature type="strand" evidence="12">
    <location>
        <begin position="171"/>
        <end position="173"/>
    </location>
</feature>
<feature type="strand" evidence="11">
    <location>
        <begin position="175"/>
        <end position="181"/>
    </location>
</feature>
<feature type="strand" evidence="11">
    <location>
        <begin position="187"/>
        <end position="193"/>
    </location>
</feature>
<feature type="turn" evidence="11">
    <location>
        <begin position="194"/>
        <end position="196"/>
    </location>
</feature>
<feature type="strand" evidence="11">
    <location>
        <begin position="203"/>
        <end position="207"/>
    </location>
</feature>
<feature type="strand" evidence="11">
    <location>
        <begin position="215"/>
        <end position="220"/>
    </location>
</feature>
<feature type="strand" evidence="11">
    <location>
        <begin position="228"/>
        <end position="234"/>
    </location>
</feature>
<feature type="strand" evidence="11">
    <location>
        <begin position="238"/>
        <end position="246"/>
    </location>
</feature>
<feature type="turn" evidence="11">
    <location>
        <begin position="247"/>
        <end position="249"/>
    </location>
</feature>
<feature type="strand" evidence="11">
    <location>
        <begin position="250"/>
        <end position="259"/>
    </location>
</feature>
<feature type="strand" evidence="11">
    <location>
        <begin position="266"/>
        <end position="271"/>
    </location>
</feature>
<feature type="helix" evidence="11">
    <location>
        <begin position="274"/>
        <end position="276"/>
    </location>
</feature>
<feature type="strand" evidence="11">
    <location>
        <begin position="280"/>
        <end position="285"/>
    </location>
</feature>
<feature type="turn" evidence="11">
    <location>
        <begin position="289"/>
        <end position="292"/>
    </location>
</feature>
<feature type="strand" evidence="11">
    <location>
        <begin position="295"/>
        <end position="300"/>
    </location>
</feature>
<feature type="turn" evidence="11">
    <location>
        <begin position="301"/>
        <end position="303"/>
    </location>
</feature>
<feature type="strand" evidence="11">
    <location>
        <begin position="304"/>
        <end position="307"/>
    </location>
</feature>